<comment type="function">
    <text evidence="2">One of the essential components for the initiation of protein synthesis. Stabilizes the binding of IF-2 and IF-3 on the 30S subunit to which N-formylmethionyl-tRNA(fMet) subsequently binds. Helps modulate mRNA selection, yielding the 30S pre-initiation complex (PIC). Upon addition of the 50S ribosomal subunit IF-1, IF-2 and IF-3 are released leaving the mature 70S translation initiation complex.</text>
</comment>
<comment type="subunit">
    <text evidence="2">Component of the 30S ribosomal translation pre-initiation complex which assembles on the 30S ribosome in the order IF-2 and IF-3, IF-1 and N-formylmethionyl-tRNA(fMet); mRNA recruitment can occur at any time during PIC assembly.</text>
</comment>
<comment type="subcellular location">
    <subcellularLocation>
        <location evidence="2">Cytoplasm</location>
    </subcellularLocation>
</comment>
<comment type="similarity">
    <text evidence="2">Belongs to the IF-1 family.</text>
</comment>
<comment type="sequence caution" evidence="3">
    <conflict type="erroneous initiation">
        <sequence resource="EMBL-CDS" id="AAC22206"/>
    </conflict>
    <text>Extended N-terminus.</text>
</comment>
<name>IF1_HAEIN</name>
<gene>
    <name evidence="2" type="primary">infA</name>
    <name type="ordered locus">HI_0548</name>
</gene>
<accession>P44322</accession>
<reference key="1">
    <citation type="journal article" date="1995" name="Science">
        <title>Whole-genome random sequencing and assembly of Haemophilus influenzae Rd.</title>
        <authorList>
            <person name="Fleischmann R.D."/>
            <person name="Adams M.D."/>
            <person name="White O."/>
            <person name="Clayton R.A."/>
            <person name="Kirkness E.F."/>
            <person name="Kerlavage A.R."/>
            <person name="Bult C.J."/>
            <person name="Tomb J.-F."/>
            <person name="Dougherty B.A."/>
            <person name="Merrick J.M."/>
            <person name="McKenney K."/>
            <person name="Sutton G.G."/>
            <person name="FitzHugh W."/>
            <person name="Fields C.A."/>
            <person name="Gocayne J.D."/>
            <person name="Scott J.D."/>
            <person name="Shirley R."/>
            <person name="Liu L.-I."/>
            <person name="Glodek A."/>
            <person name="Kelley J.M."/>
            <person name="Weidman J.F."/>
            <person name="Phillips C.A."/>
            <person name="Spriggs T."/>
            <person name="Hedblom E."/>
            <person name="Cotton M.D."/>
            <person name="Utterback T.R."/>
            <person name="Hanna M.C."/>
            <person name="Nguyen D.T."/>
            <person name="Saudek D.M."/>
            <person name="Brandon R.C."/>
            <person name="Fine L.D."/>
            <person name="Fritchman J.L."/>
            <person name="Fuhrmann J.L."/>
            <person name="Geoghagen N.S.M."/>
            <person name="Gnehm C.L."/>
            <person name="McDonald L.A."/>
            <person name="Small K.V."/>
            <person name="Fraser C.M."/>
            <person name="Smith H.O."/>
            <person name="Venter J.C."/>
        </authorList>
    </citation>
    <scope>NUCLEOTIDE SEQUENCE [LARGE SCALE GENOMIC DNA]</scope>
    <source>
        <strain>ATCC 51907 / DSM 11121 / KW20 / Rd</strain>
    </source>
</reference>
<proteinExistence type="inferred from homology"/>
<evidence type="ECO:0000250" key="1"/>
<evidence type="ECO:0000255" key="2">
    <source>
        <dbReference type="HAMAP-Rule" id="MF_00075"/>
    </source>
</evidence>
<evidence type="ECO:0000305" key="3"/>
<dbReference type="EMBL" id="L42023">
    <property type="protein sequence ID" value="AAC22206.1"/>
    <property type="status" value="ALT_INIT"/>
    <property type="molecule type" value="Genomic_DNA"/>
</dbReference>
<dbReference type="PIR" id="H64076">
    <property type="entry name" value="H64076"/>
</dbReference>
<dbReference type="RefSeq" id="NP_438706.2">
    <property type="nucleotide sequence ID" value="NC_000907.1"/>
</dbReference>
<dbReference type="SMR" id="P44322"/>
<dbReference type="STRING" id="71421.HI_0548"/>
<dbReference type="EnsemblBacteria" id="AAC22206">
    <property type="protein sequence ID" value="AAC22206"/>
    <property type="gene ID" value="HI_0548"/>
</dbReference>
<dbReference type="KEGG" id="hin:HI_0548"/>
<dbReference type="PATRIC" id="fig|71421.8.peg.567"/>
<dbReference type="eggNOG" id="COG0361">
    <property type="taxonomic scope" value="Bacteria"/>
</dbReference>
<dbReference type="HOGENOM" id="CLU_151267_1_0_6"/>
<dbReference type="OrthoDB" id="9803250at2"/>
<dbReference type="PhylomeDB" id="P44322"/>
<dbReference type="BioCyc" id="HINF71421:G1GJ1-561-MONOMER"/>
<dbReference type="PRO" id="PR:P44322"/>
<dbReference type="Proteomes" id="UP000000579">
    <property type="component" value="Chromosome"/>
</dbReference>
<dbReference type="GO" id="GO:0005829">
    <property type="term" value="C:cytosol"/>
    <property type="evidence" value="ECO:0000318"/>
    <property type="project" value="GO_Central"/>
</dbReference>
<dbReference type="GO" id="GO:0043022">
    <property type="term" value="F:ribosome binding"/>
    <property type="evidence" value="ECO:0000318"/>
    <property type="project" value="GO_Central"/>
</dbReference>
<dbReference type="GO" id="GO:0019843">
    <property type="term" value="F:rRNA binding"/>
    <property type="evidence" value="ECO:0007669"/>
    <property type="project" value="UniProtKB-UniRule"/>
</dbReference>
<dbReference type="GO" id="GO:0003743">
    <property type="term" value="F:translation initiation factor activity"/>
    <property type="evidence" value="ECO:0007669"/>
    <property type="project" value="UniProtKB-UniRule"/>
</dbReference>
<dbReference type="CDD" id="cd04451">
    <property type="entry name" value="S1_IF1"/>
    <property type="match status" value="1"/>
</dbReference>
<dbReference type="FunFam" id="2.40.50.140:FF:000002">
    <property type="entry name" value="Translation initiation factor IF-1"/>
    <property type="match status" value="1"/>
</dbReference>
<dbReference type="Gene3D" id="2.40.50.140">
    <property type="entry name" value="Nucleic acid-binding proteins"/>
    <property type="match status" value="1"/>
</dbReference>
<dbReference type="HAMAP" id="MF_00075">
    <property type="entry name" value="IF_1"/>
    <property type="match status" value="1"/>
</dbReference>
<dbReference type="InterPro" id="IPR012340">
    <property type="entry name" value="NA-bd_OB-fold"/>
</dbReference>
<dbReference type="InterPro" id="IPR006196">
    <property type="entry name" value="RNA-binding_domain_S1_IF1"/>
</dbReference>
<dbReference type="InterPro" id="IPR003029">
    <property type="entry name" value="S1_domain"/>
</dbReference>
<dbReference type="InterPro" id="IPR004368">
    <property type="entry name" value="TIF_IF1"/>
</dbReference>
<dbReference type="NCBIfam" id="TIGR00008">
    <property type="entry name" value="infA"/>
    <property type="match status" value="1"/>
</dbReference>
<dbReference type="PANTHER" id="PTHR33370">
    <property type="entry name" value="TRANSLATION INITIATION FACTOR IF-1, CHLOROPLASTIC"/>
    <property type="match status" value="1"/>
</dbReference>
<dbReference type="PANTHER" id="PTHR33370:SF1">
    <property type="entry name" value="TRANSLATION INITIATION FACTOR IF-1, CHLOROPLASTIC"/>
    <property type="match status" value="1"/>
</dbReference>
<dbReference type="Pfam" id="PF01176">
    <property type="entry name" value="eIF-1a"/>
    <property type="match status" value="1"/>
</dbReference>
<dbReference type="SMART" id="SM00316">
    <property type="entry name" value="S1"/>
    <property type="match status" value="1"/>
</dbReference>
<dbReference type="SUPFAM" id="SSF50249">
    <property type="entry name" value="Nucleic acid-binding proteins"/>
    <property type="match status" value="1"/>
</dbReference>
<dbReference type="PROSITE" id="PS50832">
    <property type="entry name" value="S1_IF1_TYPE"/>
    <property type="match status" value="1"/>
</dbReference>
<protein>
    <recommendedName>
        <fullName evidence="2">Translation initiation factor IF-1</fullName>
    </recommendedName>
</protein>
<sequence>MAKEDCIEMQGTILETLPNTMFRVELENGHVVTAHISGKMRKNYIRILTGDKVTVEMTPYDLSKGRIIFRSR</sequence>
<keyword id="KW-0963">Cytoplasm</keyword>
<keyword id="KW-0396">Initiation factor</keyword>
<keyword id="KW-0648">Protein biosynthesis</keyword>
<keyword id="KW-1185">Reference proteome</keyword>
<keyword id="KW-0694">RNA-binding</keyword>
<keyword id="KW-0699">rRNA-binding</keyword>
<feature type="initiator methionine" description="Removed" evidence="1">
    <location>
        <position position="1"/>
    </location>
</feature>
<feature type="chain" id="PRO_0000095797" description="Translation initiation factor IF-1">
    <location>
        <begin position="2"/>
        <end position="72"/>
    </location>
</feature>
<feature type="domain" description="S1-like" evidence="2">
    <location>
        <begin position="2"/>
        <end position="72"/>
    </location>
</feature>
<organism>
    <name type="scientific">Haemophilus influenzae (strain ATCC 51907 / DSM 11121 / KW20 / Rd)</name>
    <dbReference type="NCBI Taxonomy" id="71421"/>
    <lineage>
        <taxon>Bacteria</taxon>
        <taxon>Pseudomonadati</taxon>
        <taxon>Pseudomonadota</taxon>
        <taxon>Gammaproteobacteria</taxon>
        <taxon>Pasteurellales</taxon>
        <taxon>Pasteurellaceae</taxon>
        <taxon>Haemophilus</taxon>
    </lineage>
</organism>